<gene>
    <name evidence="1" type="primary">leuB</name>
    <name type="ordered locus">Rru_A1191</name>
</gene>
<sequence length="370" mass="39536">MPVSKKILFLAGDGIGPEVMAQVRRVMDWLNQTGRTAFEVEDALVGGAAYDAQGTPLHDDTVALALAADAVLLGAVGGPKWDASLPFELKPERGLLRLRKDLELFANLRPAMVFDALAEASTLKTELVSGLDVMIVRELTGGVYFGQPRGISALPNGERRGVNTQVYDTHEIVRVAKVAFDLAGKRGKRLCSVEKANVMESGLLWREEVTKLGADYPEIALSHMYADNCAMQLVRQPKQFDVIVTDNLFGDILSDCAAMLTGSLGMLPSASLGAADAAGNRRAMYEPVHGSAPDIAGQDKANPLATILSFSMMLRYSFDLAEEADLVDNAVRGVLAKGLRTGDIFQPGKTLVGTTGMGDALLAEMAQLAN</sequence>
<accession>Q2RV53</accession>
<reference key="1">
    <citation type="journal article" date="2011" name="Stand. Genomic Sci.">
        <title>Complete genome sequence of Rhodospirillum rubrum type strain (S1).</title>
        <authorList>
            <person name="Munk A.C."/>
            <person name="Copeland A."/>
            <person name="Lucas S."/>
            <person name="Lapidus A."/>
            <person name="Del Rio T.G."/>
            <person name="Barry K."/>
            <person name="Detter J.C."/>
            <person name="Hammon N."/>
            <person name="Israni S."/>
            <person name="Pitluck S."/>
            <person name="Brettin T."/>
            <person name="Bruce D."/>
            <person name="Han C."/>
            <person name="Tapia R."/>
            <person name="Gilna P."/>
            <person name="Schmutz J."/>
            <person name="Larimer F."/>
            <person name="Land M."/>
            <person name="Kyrpides N.C."/>
            <person name="Mavromatis K."/>
            <person name="Richardson P."/>
            <person name="Rohde M."/>
            <person name="Goeker M."/>
            <person name="Klenk H.P."/>
            <person name="Zhang Y."/>
            <person name="Roberts G.P."/>
            <person name="Reslewic S."/>
            <person name="Schwartz D.C."/>
        </authorList>
    </citation>
    <scope>NUCLEOTIDE SEQUENCE [LARGE SCALE GENOMIC DNA]</scope>
    <source>
        <strain>ATCC 11170 / ATH 1.1.1 / DSM 467 / LMG 4362 / NCIMB 8255 / S1</strain>
    </source>
</reference>
<proteinExistence type="inferred from homology"/>
<keyword id="KW-0028">Amino-acid biosynthesis</keyword>
<keyword id="KW-0100">Branched-chain amino acid biosynthesis</keyword>
<keyword id="KW-0963">Cytoplasm</keyword>
<keyword id="KW-0432">Leucine biosynthesis</keyword>
<keyword id="KW-0460">Magnesium</keyword>
<keyword id="KW-0464">Manganese</keyword>
<keyword id="KW-0479">Metal-binding</keyword>
<keyword id="KW-0520">NAD</keyword>
<keyword id="KW-0560">Oxidoreductase</keyword>
<keyword id="KW-1185">Reference proteome</keyword>
<dbReference type="EC" id="1.1.1.85" evidence="1"/>
<dbReference type="EMBL" id="CP000230">
    <property type="protein sequence ID" value="ABC21992.1"/>
    <property type="molecule type" value="Genomic_DNA"/>
</dbReference>
<dbReference type="RefSeq" id="WP_011388946.1">
    <property type="nucleotide sequence ID" value="NC_007643.1"/>
</dbReference>
<dbReference type="RefSeq" id="YP_426279.1">
    <property type="nucleotide sequence ID" value="NC_007643.1"/>
</dbReference>
<dbReference type="SMR" id="Q2RV53"/>
<dbReference type="STRING" id="269796.Rru_A1191"/>
<dbReference type="EnsemblBacteria" id="ABC21992">
    <property type="protein sequence ID" value="ABC21992"/>
    <property type="gene ID" value="Rru_A1191"/>
</dbReference>
<dbReference type="KEGG" id="rru:Rru_A1191"/>
<dbReference type="PATRIC" id="fig|269796.9.peg.1255"/>
<dbReference type="eggNOG" id="COG0473">
    <property type="taxonomic scope" value="Bacteria"/>
</dbReference>
<dbReference type="HOGENOM" id="CLU_031953_0_3_5"/>
<dbReference type="PhylomeDB" id="Q2RV53"/>
<dbReference type="UniPathway" id="UPA00048">
    <property type="reaction ID" value="UER00072"/>
</dbReference>
<dbReference type="Proteomes" id="UP000001929">
    <property type="component" value="Chromosome"/>
</dbReference>
<dbReference type="GO" id="GO:0005829">
    <property type="term" value="C:cytosol"/>
    <property type="evidence" value="ECO:0007669"/>
    <property type="project" value="TreeGrafter"/>
</dbReference>
<dbReference type="GO" id="GO:0003862">
    <property type="term" value="F:3-isopropylmalate dehydrogenase activity"/>
    <property type="evidence" value="ECO:0007669"/>
    <property type="project" value="UniProtKB-UniRule"/>
</dbReference>
<dbReference type="GO" id="GO:0000287">
    <property type="term" value="F:magnesium ion binding"/>
    <property type="evidence" value="ECO:0007669"/>
    <property type="project" value="InterPro"/>
</dbReference>
<dbReference type="GO" id="GO:0051287">
    <property type="term" value="F:NAD binding"/>
    <property type="evidence" value="ECO:0007669"/>
    <property type="project" value="InterPro"/>
</dbReference>
<dbReference type="GO" id="GO:0009098">
    <property type="term" value="P:L-leucine biosynthetic process"/>
    <property type="evidence" value="ECO:0007669"/>
    <property type="project" value="UniProtKB-UniRule"/>
</dbReference>
<dbReference type="FunFam" id="3.40.718.10:FF:000006">
    <property type="entry name" value="3-isopropylmalate dehydrogenase"/>
    <property type="match status" value="1"/>
</dbReference>
<dbReference type="Gene3D" id="3.40.718.10">
    <property type="entry name" value="Isopropylmalate Dehydrogenase"/>
    <property type="match status" value="1"/>
</dbReference>
<dbReference type="HAMAP" id="MF_01033">
    <property type="entry name" value="LeuB_type1"/>
    <property type="match status" value="1"/>
</dbReference>
<dbReference type="InterPro" id="IPR019818">
    <property type="entry name" value="IsoCit/isopropylmalate_DH_CS"/>
</dbReference>
<dbReference type="InterPro" id="IPR024084">
    <property type="entry name" value="IsoPropMal-DH-like_dom"/>
</dbReference>
<dbReference type="InterPro" id="IPR004429">
    <property type="entry name" value="Isopropylmalate_DH"/>
</dbReference>
<dbReference type="NCBIfam" id="TIGR00169">
    <property type="entry name" value="leuB"/>
    <property type="match status" value="1"/>
</dbReference>
<dbReference type="PANTHER" id="PTHR42979">
    <property type="entry name" value="3-ISOPROPYLMALATE DEHYDROGENASE"/>
    <property type="match status" value="1"/>
</dbReference>
<dbReference type="PANTHER" id="PTHR42979:SF1">
    <property type="entry name" value="3-ISOPROPYLMALATE DEHYDROGENASE"/>
    <property type="match status" value="1"/>
</dbReference>
<dbReference type="Pfam" id="PF00180">
    <property type="entry name" value="Iso_dh"/>
    <property type="match status" value="1"/>
</dbReference>
<dbReference type="SMART" id="SM01329">
    <property type="entry name" value="Iso_dh"/>
    <property type="match status" value="1"/>
</dbReference>
<dbReference type="SUPFAM" id="SSF53659">
    <property type="entry name" value="Isocitrate/Isopropylmalate dehydrogenase-like"/>
    <property type="match status" value="1"/>
</dbReference>
<dbReference type="PROSITE" id="PS00470">
    <property type="entry name" value="IDH_IMDH"/>
    <property type="match status" value="1"/>
</dbReference>
<comment type="function">
    <text evidence="1">Catalyzes the oxidation of 3-carboxy-2-hydroxy-4-methylpentanoate (3-isopropylmalate) to 3-carboxy-4-methyl-2-oxopentanoate. The product decarboxylates to 4-methyl-2 oxopentanoate.</text>
</comment>
<comment type="catalytic activity">
    <reaction evidence="1">
        <text>(2R,3S)-3-isopropylmalate + NAD(+) = 4-methyl-2-oxopentanoate + CO2 + NADH</text>
        <dbReference type="Rhea" id="RHEA:32271"/>
        <dbReference type="ChEBI" id="CHEBI:16526"/>
        <dbReference type="ChEBI" id="CHEBI:17865"/>
        <dbReference type="ChEBI" id="CHEBI:35121"/>
        <dbReference type="ChEBI" id="CHEBI:57540"/>
        <dbReference type="ChEBI" id="CHEBI:57945"/>
        <dbReference type="EC" id="1.1.1.85"/>
    </reaction>
</comment>
<comment type="cofactor">
    <cofactor evidence="1">
        <name>Mg(2+)</name>
        <dbReference type="ChEBI" id="CHEBI:18420"/>
    </cofactor>
    <cofactor evidence="1">
        <name>Mn(2+)</name>
        <dbReference type="ChEBI" id="CHEBI:29035"/>
    </cofactor>
    <text evidence="1">Binds 1 Mg(2+) or Mn(2+) ion per subunit.</text>
</comment>
<comment type="pathway">
    <text evidence="1">Amino-acid biosynthesis; L-leucine biosynthesis; L-leucine from 3-methyl-2-oxobutanoate: step 3/4.</text>
</comment>
<comment type="subunit">
    <text evidence="1">Homodimer.</text>
</comment>
<comment type="subcellular location">
    <subcellularLocation>
        <location evidence="1">Cytoplasm</location>
    </subcellularLocation>
</comment>
<comment type="similarity">
    <text evidence="1">Belongs to the isocitrate and isopropylmalate dehydrogenases family. LeuB type 1 subfamily.</text>
</comment>
<protein>
    <recommendedName>
        <fullName evidence="1">3-isopropylmalate dehydrogenase</fullName>
        <ecNumber evidence="1">1.1.1.85</ecNumber>
    </recommendedName>
    <alternativeName>
        <fullName evidence="1">3-IPM-DH</fullName>
    </alternativeName>
    <alternativeName>
        <fullName evidence="1">Beta-IPM dehydrogenase</fullName>
        <shortName evidence="1">IMDH</shortName>
    </alternativeName>
</protein>
<name>LEU3_RHORT</name>
<feature type="chain" id="PRO_0000250135" description="3-isopropylmalate dehydrogenase">
    <location>
        <begin position="1"/>
        <end position="370"/>
    </location>
</feature>
<feature type="binding site" evidence="1">
    <location>
        <position position="99"/>
    </location>
    <ligand>
        <name>substrate</name>
    </ligand>
</feature>
<feature type="binding site" evidence="1">
    <location>
        <position position="109"/>
    </location>
    <ligand>
        <name>substrate</name>
    </ligand>
</feature>
<feature type="binding site" evidence="1">
    <location>
        <position position="137"/>
    </location>
    <ligand>
        <name>substrate</name>
    </ligand>
</feature>
<feature type="binding site" evidence="1">
    <location>
        <position position="227"/>
    </location>
    <ligand>
        <name>Mg(2+)</name>
        <dbReference type="ChEBI" id="CHEBI:18420"/>
    </ligand>
</feature>
<feature type="binding site" evidence="1">
    <location>
        <position position="227"/>
    </location>
    <ligand>
        <name>substrate</name>
    </ligand>
</feature>
<feature type="binding site" evidence="1">
    <location>
        <position position="251"/>
    </location>
    <ligand>
        <name>Mg(2+)</name>
        <dbReference type="ChEBI" id="CHEBI:18420"/>
    </ligand>
</feature>
<feature type="binding site" evidence="1">
    <location>
        <position position="255"/>
    </location>
    <ligand>
        <name>Mg(2+)</name>
        <dbReference type="ChEBI" id="CHEBI:18420"/>
    </ligand>
</feature>
<feature type="binding site" evidence="1">
    <location>
        <begin position="290"/>
        <end position="302"/>
    </location>
    <ligand>
        <name>NAD(+)</name>
        <dbReference type="ChEBI" id="CHEBI:57540"/>
    </ligand>
</feature>
<feature type="site" description="Important for catalysis" evidence="1">
    <location>
        <position position="144"/>
    </location>
</feature>
<feature type="site" description="Important for catalysis" evidence="1">
    <location>
        <position position="195"/>
    </location>
</feature>
<evidence type="ECO:0000255" key="1">
    <source>
        <dbReference type="HAMAP-Rule" id="MF_01033"/>
    </source>
</evidence>
<organism>
    <name type="scientific">Rhodospirillum rubrum (strain ATCC 11170 / ATH 1.1.1 / DSM 467 / LMG 4362 / NCIMB 8255 / S1)</name>
    <dbReference type="NCBI Taxonomy" id="269796"/>
    <lineage>
        <taxon>Bacteria</taxon>
        <taxon>Pseudomonadati</taxon>
        <taxon>Pseudomonadota</taxon>
        <taxon>Alphaproteobacteria</taxon>
        <taxon>Rhodospirillales</taxon>
        <taxon>Rhodospirillaceae</taxon>
        <taxon>Rhodospirillum</taxon>
    </lineage>
</organism>